<feature type="chain" id="PRO_0000278503" description="SRP-independent targeting protein 2 homolog">
    <location>
        <begin position="1"/>
        <end position="192"/>
    </location>
</feature>
<feature type="transmembrane region" description="Helical" evidence="2">
    <location>
        <begin position="16"/>
        <end position="36"/>
    </location>
</feature>
<feature type="transmembrane region" description="Helical" evidence="2">
    <location>
        <begin position="102"/>
        <end position="122"/>
    </location>
</feature>
<feature type="region of interest" description="Disordered" evidence="3">
    <location>
        <begin position="149"/>
        <end position="192"/>
    </location>
</feature>
<feature type="compositionally biased region" description="Low complexity" evidence="3">
    <location>
        <begin position="151"/>
        <end position="167"/>
    </location>
</feature>
<feature type="compositionally biased region" description="Basic residues" evidence="3">
    <location>
        <begin position="178"/>
        <end position="192"/>
    </location>
</feature>
<comment type="function">
    <text evidence="1 4">May function in a SRP (signal recognition particle) and GET (guided entry of tail-anchored proteins) independent pathway for targeting a broad range of substrate proteins to the endoplasmic reticulum (By similarity). Has a role in meiosis (PubMed:16303567).</text>
</comment>
<comment type="subcellular location">
    <subcellularLocation>
        <location evidence="5">Endoplasmic reticulum membrane</location>
        <topology evidence="5">Multi-pass membrane protein</topology>
    </subcellularLocation>
</comment>
<comment type="similarity">
    <text evidence="7">Belongs to the TMEM208 family.</text>
</comment>
<evidence type="ECO:0000250" key="1">
    <source>
        <dbReference type="UniProtKB" id="Q99382"/>
    </source>
</evidence>
<evidence type="ECO:0000255" key="2"/>
<evidence type="ECO:0000256" key="3">
    <source>
        <dbReference type="SAM" id="MobiDB-lite"/>
    </source>
</evidence>
<evidence type="ECO:0000269" key="4">
    <source>
    </source>
</evidence>
<evidence type="ECO:0000269" key="5">
    <source>
    </source>
</evidence>
<evidence type="ECO:0000303" key="6">
    <source>
    </source>
</evidence>
<evidence type="ECO:0000305" key="7"/>
<evidence type="ECO:0000312" key="8">
    <source>
        <dbReference type="PomBase" id="SPAC56E4.05"/>
    </source>
</evidence>
<sequence length="192" mass="22104">MANAAQKKLAAQNKHILTFMLAADLIVNVLFWILRFFVRSGLSKFSKFVYAFASISSGFLHYQLHRAAAPKYDARGSLLYVGQDLLQEGVTSYMVDYMYFSWILIFLAALTSVKVFAFYLLVPIFVVYKAAPLLKMLLQQLKNFKNQALNQPPQQQQQQQQQQHQQHATPSEPVLSKRQQKLRKKAAKYSRP</sequence>
<name>MUG69_SCHPO</name>
<proteinExistence type="evidence at protein level"/>
<gene>
    <name evidence="6" type="primary">mug69</name>
    <name evidence="8" type="ORF">SPAC56E4.05</name>
</gene>
<reference key="1">
    <citation type="journal article" date="2002" name="Nature">
        <title>The genome sequence of Schizosaccharomyces pombe.</title>
        <authorList>
            <person name="Wood V."/>
            <person name="Gwilliam R."/>
            <person name="Rajandream M.A."/>
            <person name="Lyne M.H."/>
            <person name="Lyne R."/>
            <person name="Stewart A."/>
            <person name="Sgouros J.G."/>
            <person name="Peat N."/>
            <person name="Hayles J."/>
            <person name="Baker S.G."/>
            <person name="Basham D."/>
            <person name="Bowman S."/>
            <person name="Brooks K."/>
            <person name="Brown D."/>
            <person name="Brown S."/>
            <person name="Chillingworth T."/>
            <person name="Churcher C.M."/>
            <person name="Collins M."/>
            <person name="Connor R."/>
            <person name="Cronin A."/>
            <person name="Davis P."/>
            <person name="Feltwell T."/>
            <person name="Fraser A."/>
            <person name="Gentles S."/>
            <person name="Goble A."/>
            <person name="Hamlin N."/>
            <person name="Harris D.E."/>
            <person name="Hidalgo J."/>
            <person name="Hodgson G."/>
            <person name="Holroyd S."/>
            <person name="Hornsby T."/>
            <person name="Howarth S."/>
            <person name="Huckle E.J."/>
            <person name="Hunt S."/>
            <person name="Jagels K."/>
            <person name="James K.D."/>
            <person name="Jones L."/>
            <person name="Jones M."/>
            <person name="Leather S."/>
            <person name="McDonald S."/>
            <person name="McLean J."/>
            <person name="Mooney P."/>
            <person name="Moule S."/>
            <person name="Mungall K.L."/>
            <person name="Murphy L.D."/>
            <person name="Niblett D."/>
            <person name="Odell C."/>
            <person name="Oliver K."/>
            <person name="O'Neil S."/>
            <person name="Pearson D."/>
            <person name="Quail M.A."/>
            <person name="Rabbinowitsch E."/>
            <person name="Rutherford K.M."/>
            <person name="Rutter S."/>
            <person name="Saunders D."/>
            <person name="Seeger K."/>
            <person name="Sharp S."/>
            <person name="Skelton J."/>
            <person name="Simmonds M.N."/>
            <person name="Squares R."/>
            <person name="Squares S."/>
            <person name="Stevens K."/>
            <person name="Taylor K."/>
            <person name="Taylor R.G."/>
            <person name="Tivey A."/>
            <person name="Walsh S.V."/>
            <person name="Warren T."/>
            <person name="Whitehead S."/>
            <person name="Woodward J.R."/>
            <person name="Volckaert G."/>
            <person name="Aert R."/>
            <person name="Robben J."/>
            <person name="Grymonprez B."/>
            <person name="Weltjens I."/>
            <person name="Vanstreels E."/>
            <person name="Rieger M."/>
            <person name="Schaefer M."/>
            <person name="Mueller-Auer S."/>
            <person name="Gabel C."/>
            <person name="Fuchs M."/>
            <person name="Duesterhoeft A."/>
            <person name="Fritzc C."/>
            <person name="Holzer E."/>
            <person name="Moestl D."/>
            <person name="Hilbert H."/>
            <person name="Borzym K."/>
            <person name="Langer I."/>
            <person name="Beck A."/>
            <person name="Lehrach H."/>
            <person name="Reinhardt R."/>
            <person name="Pohl T.M."/>
            <person name="Eger P."/>
            <person name="Zimmermann W."/>
            <person name="Wedler H."/>
            <person name="Wambutt R."/>
            <person name="Purnelle B."/>
            <person name="Goffeau A."/>
            <person name="Cadieu E."/>
            <person name="Dreano S."/>
            <person name="Gloux S."/>
            <person name="Lelaure V."/>
            <person name="Mottier S."/>
            <person name="Galibert F."/>
            <person name="Aves S.J."/>
            <person name="Xiang Z."/>
            <person name="Hunt C."/>
            <person name="Moore K."/>
            <person name="Hurst S.M."/>
            <person name="Lucas M."/>
            <person name="Rochet M."/>
            <person name="Gaillardin C."/>
            <person name="Tallada V.A."/>
            <person name="Garzon A."/>
            <person name="Thode G."/>
            <person name="Daga R.R."/>
            <person name="Cruzado L."/>
            <person name="Jimenez J."/>
            <person name="Sanchez M."/>
            <person name="del Rey F."/>
            <person name="Benito J."/>
            <person name="Dominguez A."/>
            <person name="Revuelta J.L."/>
            <person name="Moreno S."/>
            <person name="Armstrong J."/>
            <person name="Forsburg S.L."/>
            <person name="Cerutti L."/>
            <person name="Lowe T."/>
            <person name="McCombie W.R."/>
            <person name="Paulsen I."/>
            <person name="Potashkin J."/>
            <person name="Shpakovski G.V."/>
            <person name="Ussery D."/>
            <person name="Barrell B.G."/>
            <person name="Nurse P."/>
        </authorList>
    </citation>
    <scope>NUCLEOTIDE SEQUENCE [LARGE SCALE GENOMIC DNA]</scope>
    <source>
        <strain>972 / ATCC 24843</strain>
    </source>
</reference>
<reference key="2">
    <citation type="journal article" date="2005" name="Curr. Biol.">
        <title>A large-scale screen in S. pombe identifies seven novel genes required for critical meiotic events.</title>
        <authorList>
            <person name="Martin-Castellanos C."/>
            <person name="Blanco M."/>
            <person name="Rozalen A.E."/>
            <person name="Perez-Hidalgo L."/>
            <person name="Garcia A.I."/>
            <person name="Conde F."/>
            <person name="Mata J."/>
            <person name="Ellermeier C."/>
            <person name="Davis L."/>
            <person name="San-Segundo P."/>
            <person name="Smith G.R."/>
            <person name="Moreno S."/>
        </authorList>
    </citation>
    <scope>FUNCTION IN MEIOSIS</scope>
</reference>
<reference key="3">
    <citation type="journal article" date="2006" name="Nat. Biotechnol.">
        <title>ORFeome cloning and global analysis of protein localization in the fission yeast Schizosaccharomyces pombe.</title>
        <authorList>
            <person name="Matsuyama A."/>
            <person name="Arai R."/>
            <person name="Yashiroda Y."/>
            <person name="Shirai A."/>
            <person name="Kamata A."/>
            <person name="Sekido S."/>
            <person name="Kobayashi Y."/>
            <person name="Hashimoto A."/>
            <person name="Hamamoto M."/>
            <person name="Hiraoka Y."/>
            <person name="Horinouchi S."/>
            <person name="Yoshida M."/>
        </authorList>
    </citation>
    <scope>SUBCELLULAR LOCATION [LARGE SCALE ANALYSIS]</scope>
</reference>
<organism>
    <name type="scientific">Schizosaccharomyces pombe (strain 972 / ATCC 24843)</name>
    <name type="common">Fission yeast</name>
    <dbReference type="NCBI Taxonomy" id="284812"/>
    <lineage>
        <taxon>Eukaryota</taxon>
        <taxon>Fungi</taxon>
        <taxon>Dikarya</taxon>
        <taxon>Ascomycota</taxon>
        <taxon>Taphrinomycotina</taxon>
        <taxon>Schizosaccharomycetes</taxon>
        <taxon>Schizosaccharomycetales</taxon>
        <taxon>Schizosaccharomycetaceae</taxon>
        <taxon>Schizosaccharomyces</taxon>
    </lineage>
</organism>
<protein>
    <recommendedName>
        <fullName evidence="1">SRP-independent targeting protein 2 homolog</fullName>
    </recommendedName>
    <alternativeName>
        <fullName evidence="6">Meiotically up-regulated gene 69 protein</fullName>
    </alternativeName>
</protein>
<dbReference type="EMBL" id="CU329670">
    <property type="protein sequence ID" value="CAB16396.2"/>
    <property type="molecule type" value="Genomic_DNA"/>
</dbReference>
<dbReference type="PIR" id="T38907">
    <property type="entry name" value="T38907"/>
</dbReference>
<dbReference type="RefSeq" id="NP_593272.1">
    <property type="nucleotide sequence ID" value="NM_001018669.2"/>
</dbReference>
<dbReference type="BioGRID" id="279646">
    <property type="interactions" value="4"/>
</dbReference>
<dbReference type="FunCoup" id="O14193">
    <property type="interactions" value="4"/>
</dbReference>
<dbReference type="STRING" id="284812.O14193"/>
<dbReference type="PaxDb" id="4896-SPAC56E4.05.1"/>
<dbReference type="EnsemblFungi" id="SPAC56E4.05.1">
    <property type="protein sequence ID" value="SPAC56E4.05.1:pep"/>
    <property type="gene ID" value="SPAC56E4.05"/>
</dbReference>
<dbReference type="GeneID" id="2543218"/>
<dbReference type="KEGG" id="spo:2543218"/>
<dbReference type="PomBase" id="SPAC56E4.05">
    <property type="gene designation" value="mug69"/>
</dbReference>
<dbReference type="VEuPathDB" id="FungiDB:SPAC56E4.05"/>
<dbReference type="eggNOG" id="KOG3269">
    <property type="taxonomic scope" value="Eukaryota"/>
</dbReference>
<dbReference type="HOGENOM" id="CLU_094308_2_1_1"/>
<dbReference type="InParanoid" id="O14193"/>
<dbReference type="OMA" id="GRPKYDA"/>
<dbReference type="PhylomeDB" id="O14193"/>
<dbReference type="PRO" id="PR:O14193"/>
<dbReference type="Proteomes" id="UP000002485">
    <property type="component" value="Chromosome I"/>
</dbReference>
<dbReference type="GO" id="GO:0005783">
    <property type="term" value="C:endoplasmic reticulum"/>
    <property type="evidence" value="ECO:0007005"/>
    <property type="project" value="PomBase"/>
</dbReference>
<dbReference type="GO" id="GO:0005789">
    <property type="term" value="C:endoplasmic reticulum membrane"/>
    <property type="evidence" value="ECO:0000266"/>
    <property type="project" value="PomBase"/>
</dbReference>
<dbReference type="GO" id="GO:0043231">
    <property type="term" value="C:intracellular membrane-bounded organelle"/>
    <property type="evidence" value="ECO:0000318"/>
    <property type="project" value="GO_Central"/>
</dbReference>
<dbReference type="GO" id="GO:0005773">
    <property type="term" value="C:vacuole"/>
    <property type="evidence" value="ECO:0007669"/>
    <property type="project" value="GOC"/>
</dbReference>
<dbReference type="GO" id="GO:0051321">
    <property type="term" value="P:meiotic cell cycle"/>
    <property type="evidence" value="ECO:0007669"/>
    <property type="project" value="UniProtKB-KW"/>
</dbReference>
<dbReference type="GO" id="GO:0045048">
    <property type="term" value="P:protein insertion into ER membrane"/>
    <property type="evidence" value="ECO:0000266"/>
    <property type="project" value="PomBase"/>
</dbReference>
<dbReference type="GO" id="GO:0045047">
    <property type="term" value="P:protein targeting to ER"/>
    <property type="evidence" value="ECO:0000266"/>
    <property type="project" value="PomBase"/>
</dbReference>
<dbReference type="GO" id="GO:0006624">
    <property type="term" value="P:vacuolar protein processing"/>
    <property type="evidence" value="ECO:0000318"/>
    <property type="project" value="GO_Central"/>
</dbReference>
<dbReference type="InterPro" id="IPR008506">
    <property type="entry name" value="SND2/TMEM208"/>
</dbReference>
<dbReference type="PANTHER" id="PTHR13505">
    <property type="entry name" value="TRANSMEMBRANE PROTEIN 208"/>
    <property type="match status" value="1"/>
</dbReference>
<dbReference type="PANTHER" id="PTHR13505:SF7">
    <property type="entry name" value="TRANSMEMBRANE PROTEIN 208"/>
    <property type="match status" value="1"/>
</dbReference>
<dbReference type="Pfam" id="PF05620">
    <property type="entry name" value="TMEM208_SND2"/>
    <property type="match status" value="1"/>
</dbReference>
<accession>O14193</accession>
<keyword id="KW-0256">Endoplasmic reticulum</keyword>
<keyword id="KW-0469">Meiosis</keyword>
<keyword id="KW-0472">Membrane</keyword>
<keyword id="KW-1185">Reference proteome</keyword>
<keyword id="KW-0812">Transmembrane</keyword>
<keyword id="KW-1133">Transmembrane helix</keyword>